<protein>
    <recommendedName>
        <fullName evidence="1">Flap endonuclease 1-B</fullName>
        <shortName evidence="1">FEN-1-B</shortName>
        <ecNumber evidence="1">3.1.-.-</ecNumber>
    </recommendedName>
    <alternativeName>
        <fullName evidence="1">Flap structure-specific endonuclease 1-B</fullName>
    </alternativeName>
</protein>
<reference key="1">
    <citation type="journal article" date="2005" name="PLoS Biol.">
        <title>The genomes of Oryza sativa: a history of duplications.</title>
        <authorList>
            <person name="Yu J."/>
            <person name="Wang J."/>
            <person name="Lin W."/>
            <person name="Li S."/>
            <person name="Li H."/>
            <person name="Zhou J."/>
            <person name="Ni P."/>
            <person name="Dong W."/>
            <person name="Hu S."/>
            <person name="Zeng C."/>
            <person name="Zhang J."/>
            <person name="Zhang Y."/>
            <person name="Li R."/>
            <person name="Xu Z."/>
            <person name="Li S."/>
            <person name="Li X."/>
            <person name="Zheng H."/>
            <person name="Cong L."/>
            <person name="Lin L."/>
            <person name="Yin J."/>
            <person name="Geng J."/>
            <person name="Li G."/>
            <person name="Shi J."/>
            <person name="Liu J."/>
            <person name="Lv H."/>
            <person name="Li J."/>
            <person name="Wang J."/>
            <person name="Deng Y."/>
            <person name="Ran L."/>
            <person name="Shi X."/>
            <person name="Wang X."/>
            <person name="Wu Q."/>
            <person name="Li C."/>
            <person name="Ren X."/>
            <person name="Wang J."/>
            <person name="Wang X."/>
            <person name="Li D."/>
            <person name="Liu D."/>
            <person name="Zhang X."/>
            <person name="Ji Z."/>
            <person name="Zhao W."/>
            <person name="Sun Y."/>
            <person name="Zhang Z."/>
            <person name="Bao J."/>
            <person name="Han Y."/>
            <person name="Dong L."/>
            <person name="Ji J."/>
            <person name="Chen P."/>
            <person name="Wu S."/>
            <person name="Liu J."/>
            <person name="Xiao Y."/>
            <person name="Bu D."/>
            <person name="Tan J."/>
            <person name="Yang L."/>
            <person name="Ye C."/>
            <person name="Zhang J."/>
            <person name="Xu J."/>
            <person name="Zhou Y."/>
            <person name="Yu Y."/>
            <person name="Zhang B."/>
            <person name="Zhuang S."/>
            <person name="Wei H."/>
            <person name="Liu B."/>
            <person name="Lei M."/>
            <person name="Yu H."/>
            <person name="Li Y."/>
            <person name="Xu H."/>
            <person name="Wei S."/>
            <person name="He X."/>
            <person name="Fang L."/>
            <person name="Zhang Z."/>
            <person name="Zhang Y."/>
            <person name="Huang X."/>
            <person name="Su Z."/>
            <person name="Tong W."/>
            <person name="Li J."/>
            <person name="Tong Z."/>
            <person name="Li S."/>
            <person name="Ye J."/>
            <person name="Wang L."/>
            <person name="Fang L."/>
            <person name="Lei T."/>
            <person name="Chen C.-S."/>
            <person name="Chen H.-C."/>
            <person name="Xu Z."/>
            <person name="Li H."/>
            <person name="Huang H."/>
            <person name="Zhang F."/>
            <person name="Xu H."/>
            <person name="Li N."/>
            <person name="Zhao C."/>
            <person name="Li S."/>
            <person name="Dong L."/>
            <person name="Huang Y."/>
            <person name="Li L."/>
            <person name="Xi Y."/>
            <person name="Qi Q."/>
            <person name="Li W."/>
            <person name="Zhang B."/>
            <person name="Hu W."/>
            <person name="Zhang Y."/>
            <person name="Tian X."/>
            <person name="Jiao Y."/>
            <person name="Liang X."/>
            <person name="Jin J."/>
            <person name="Gao L."/>
            <person name="Zheng W."/>
            <person name="Hao B."/>
            <person name="Liu S.-M."/>
            <person name="Wang W."/>
            <person name="Yuan L."/>
            <person name="Cao M."/>
            <person name="McDermott J."/>
            <person name="Samudrala R."/>
            <person name="Wang J."/>
            <person name="Wong G.K.-S."/>
            <person name="Yang H."/>
        </authorList>
    </citation>
    <scope>NUCLEOTIDE SEQUENCE [LARGE SCALE GENOMIC DNA]</scope>
    <source>
        <strain>cv. 93-11</strain>
    </source>
</reference>
<comment type="function">
    <text evidence="1">Structure-specific nuclease with 5'-flap endonuclease and 5'-3' exonuclease activities involved in DNA replication and repair. During DNA replication, cleaves the 5'-overhanging flap structure that is generated by displacement synthesis when DNA polymerase encounters the 5'-end of a downstream Okazaki fragment. It enters the flap from the 5'-end and then tracks to cleave the flap base, leaving a nick for ligation. Also involved in the long patch base excision repair (LP-BER) pathway, by cleaving within the apurinic/apyrimidinic (AP) site-terminated flap. Acts as a genome stabilization factor that prevents flaps from equilibrating into structures that lead to duplications and deletions. Also possesses 5'-3' exonuclease activity on nicked or gapped double-stranded DNA, and exhibits RNase H activity. Also involved in replication and repair of rDNA and in repairing mitochondrial DNA.</text>
</comment>
<comment type="cofactor">
    <cofactor evidence="1">
        <name>Mg(2+)</name>
        <dbReference type="ChEBI" id="CHEBI:18420"/>
    </cofactor>
    <text evidence="1">Binds 2 magnesium ions per subunit. They probably participate in the reaction catalyzed by the enzyme. May bind an additional third magnesium ion after substrate binding.</text>
</comment>
<comment type="subunit">
    <text evidence="1">Interacts with PCNA. Three molecules of FEN1 bind to one PCNA trimer with each molecule binding to one PCNA monomer. PCNA stimulates the nuclease activity without altering cleavage specificity.</text>
</comment>
<comment type="subcellular location">
    <subcellularLocation>
        <location evidence="1">Nucleus</location>
        <location evidence="1">Nucleolus</location>
    </subcellularLocation>
    <subcellularLocation>
        <location evidence="1">Nucleus</location>
        <location evidence="1">Nucleoplasm</location>
    </subcellularLocation>
    <subcellularLocation>
        <location evidence="1">Mitochondrion</location>
    </subcellularLocation>
    <text evidence="1">Resides mostly in the nucleoli and relocalizes to the nucleoplasm upon DNA damage.</text>
</comment>
<comment type="PTM">
    <text evidence="1">Phosphorylated. Phosphorylation upon DNA damage induces relocalization to the nuclear plasma.</text>
</comment>
<comment type="similarity">
    <text evidence="1">Belongs to the XPG/RAD2 endonuclease family. FEN1 subfamily.</text>
</comment>
<proteinExistence type="inferred from homology"/>
<name>FEN12_ORYSI</name>
<sequence>MGIKGLTKLLAEHAPGAAVRRRVEDYRGRVVAIDTSLSIYQFLIVVGRKGTEVLTNEAGEVTSHLQGMLNRTVRILEAGIKPVFVFDGEPPDMKKKELAKRSLKRDGSSEDLNRAIEVGDEDLIEKFSKRTVKVTKKHNEDCKRLLSLMGVPVVQAPGEAEAQCAALCENHKVFAIASEDMDSLTFGARRFLRHLTDLSFKRSPVTEFEVSKVLEELGLTMDQFIDLCILSGCDYCENIRGIGGQRALKLIRQHGYIEEVVQNLSQTRYSVPEDWPYQEVRALFKEPNVCTDIPDFLWTPPDEEGLINFLAAENNFSPDRVVKSVEKIKAANDKFSLGRGKLLAPVANLTGSTSTAGKEPKCILGGPGQVMKARSPLQVCKSSSLNFIHDNSKAFMLGRRSGFLRISTYASI</sequence>
<evidence type="ECO:0000255" key="1">
    <source>
        <dbReference type="HAMAP-Rule" id="MF_03140"/>
    </source>
</evidence>
<gene>
    <name evidence="1" type="primary">FEN1b</name>
    <name type="ORF">OsI_14202</name>
</gene>
<organism>
    <name type="scientific">Oryza sativa subsp. indica</name>
    <name type="common">Rice</name>
    <dbReference type="NCBI Taxonomy" id="39946"/>
    <lineage>
        <taxon>Eukaryota</taxon>
        <taxon>Viridiplantae</taxon>
        <taxon>Streptophyta</taxon>
        <taxon>Embryophyta</taxon>
        <taxon>Tracheophyta</taxon>
        <taxon>Spermatophyta</taxon>
        <taxon>Magnoliopsida</taxon>
        <taxon>Liliopsida</taxon>
        <taxon>Poales</taxon>
        <taxon>Poaceae</taxon>
        <taxon>BOP clade</taxon>
        <taxon>Oryzoideae</taxon>
        <taxon>Oryzeae</taxon>
        <taxon>Oryzinae</taxon>
        <taxon>Oryza</taxon>
        <taxon>Oryza sativa</taxon>
    </lineage>
</organism>
<dbReference type="EC" id="3.1.-.-" evidence="1"/>
<dbReference type="EMBL" id="CM000128">
    <property type="protein sequence ID" value="EEC76470.1"/>
    <property type="molecule type" value="Genomic_DNA"/>
</dbReference>
<dbReference type="SMR" id="B8AMS4"/>
<dbReference type="STRING" id="39946.B8AMS4"/>
<dbReference type="EnsemblPlants" id="BGIOSGA013884-TA">
    <property type="protein sequence ID" value="BGIOSGA013884-PA"/>
    <property type="gene ID" value="BGIOSGA013884"/>
</dbReference>
<dbReference type="Gramene" id="BGIOSGA013884-TA">
    <property type="protein sequence ID" value="BGIOSGA013884-PA"/>
    <property type="gene ID" value="BGIOSGA013884"/>
</dbReference>
<dbReference type="HOGENOM" id="CLU_032444_2_0_1"/>
<dbReference type="OMA" id="IQEVHID"/>
<dbReference type="Proteomes" id="UP000007015">
    <property type="component" value="Chromosome 3"/>
</dbReference>
<dbReference type="GO" id="GO:0005739">
    <property type="term" value="C:mitochondrion"/>
    <property type="evidence" value="ECO:0007669"/>
    <property type="project" value="UniProtKB-SubCell"/>
</dbReference>
<dbReference type="GO" id="GO:0005730">
    <property type="term" value="C:nucleolus"/>
    <property type="evidence" value="ECO:0007669"/>
    <property type="project" value="UniProtKB-SubCell"/>
</dbReference>
<dbReference type="GO" id="GO:0005654">
    <property type="term" value="C:nucleoplasm"/>
    <property type="evidence" value="ECO:0007669"/>
    <property type="project" value="UniProtKB-SubCell"/>
</dbReference>
<dbReference type="GO" id="GO:0008409">
    <property type="term" value="F:5'-3' exonuclease activity"/>
    <property type="evidence" value="ECO:0007669"/>
    <property type="project" value="UniProtKB-UniRule"/>
</dbReference>
<dbReference type="GO" id="GO:0017108">
    <property type="term" value="F:5'-flap endonuclease activity"/>
    <property type="evidence" value="ECO:0007669"/>
    <property type="project" value="UniProtKB-UniRule"/>
</dbReference>
<dbReference type="GO" id="GO:0003677">
    <property type="term" value="F:DNA binding"/>
    <property type="evidence" value="ECO:0007669"/>
    <property type="project" value="UniProtKB-UniRule"/>
</dbReference>
<dbReference type="GO" id="GO:0000287">
    <property type="term" value="F:magnesium ion binding"/>
    <property type="evidence" value="ECO:0007669"/>
    <property type="project" value="UniProtKB-UniRule"/>
</dbReference>
<dbReference type="GO" id="GO:0006284">
    <property type="term" value="P:base-excision repair"/>
    <property type="evidence" value="ECO:0007669"/>
    <property type="project" value="UniProtKB-UniRule"/>
</dbReference>
<dbReference type="GO" id="GO:0043137">
    <property type="term" value="P:DNA replication, removal of RNA primer"/>
    <property type="evidence" value="ECO:0007669"/>
    <property type="project" value="UniProtKB-UniRule"/>
</dbReference>
<dbReference type="CDD" id="cd09907">
    <property type="entry name" value="H3TH_FEN1-Euk"/>
    <property type="match status" value="1"/>
</dbReference>
<dbReference type="CDD" id="cd09867">
    <property type="entry name" value="PIN_FEN1"/>
    <property type="match status" value="1"/>
</dbReference>
<dbReference type="FunFam" id="1.10.150.20:FF:000009">
    <property type="entry name" value="Flap endonuclease 1"/>
    <property type="match status" value="1"/>
</dbReference>
<dbReference type="FunFam" id="3.40.50.1010:FF:000015">
    <property type="entry name" value="Flap endonuclease 1"/>
    <property type="match status" value="1"/>
</dbReference>
<dbReference type="Gene3D" id="1.10.150.20">
    <property type="entry name" value="5' to 3' exonuclease, C-terminal subdomain"/>
    <property type="match status" value="1"/>
</dbReference>
<dbReference type="Gene3D" id="3.40.50.1010">
    <property type="entry name" value="5'-nuclease"/>
    <property type="match status" value="1"/>
</dbReference>
<dbReference type="HAMAP" id="MF_00614">
    <property type="entry name" value="Fen"/>
    <property type="match status" value="1"/>
</dbReference>
<dbReference type="InterPro" id="IPR002421">
    <property type="entry name" value="5-3_exonuclease"/>
</dbReference>
<dbReference type="InterPro" id="IPR036279">
    <property type="entry name" value="5-3_exonuclease_C_sf"/>
</dbReference>
<dbReference type="InterPro" id="IPR023426">
    <property type="entry name" value="Flap_endonuc"/>
</dbReference>
<dbReference type="InterPro" id="IPR008918">
    <property type="entry name" value="HhH2"/>
</dbReference>
<dbReference type="InterPro" id="IPR029060">
    <property type="entry name" value="PIN-like_dom_sf"/>
</dbReference>
<dbReference type="InterPro" id="IPR006086">
    <property type="entry name" value="XPG-I_dom"/>
</dbReference>
<dbReference type="InterPro" id="IPR006084">
    <property type="entry name" value="XPG/Rad2"/>
</dbReference>
<dbReference type="InterPro" id="IPR019974">
    <property type="entry name" value="XPG_CS"/>
</dbReference>
<dbReference type="InterPro" id="IPR006085">
    <property type="entry name" value="XPG_DNA_repair_N"/>
</dbReference>
<dbReference type="PANTHER" id="PTHR11081:SF56">
    <property type="entry name" value="FLAP ENDONUCLEASE 1-B"/>
    <property type="match status" value="1"/>
</dbReference>
<dbReference type="PANTHER" id="PTHR11081">
    <property type="entry name" value="FLAP ENDONUCLEASE FAMILY MEMBER"/>
    <property type="match status" value="1"/>
</dbReference>
<dbReference type="Pfam" id="PF00867">
    <property type="entry name" value="XPG_I"/>
    <property type="match status" value="1"/>
</dbReference>
<dbReference type="Pfam" id="PF00752">
    <property type="entry name" value="XPG_N"/>
    <property type="match status" value="1"/>
</dbReference>
<dbReference type="PRINTS" id="PR00853">
    <property type="entry name" value="XPGRADSUPER"/>
</dbReference>
<dbReference type="SMART" id="SM00475">
    <property type="entry name" value="53EXOc"/>
    <property type="match status" value="1"/>
</dbReference>
<dbReference type="SMART" id="SM00279">
    <property type="entry name" value="HhH2"/>
    <property type="match status" value="1"/>
</dbReference>
<dbReference type="SMART" id="SM00484">
    <property type="entry name" value="XPGI"/>
    <property type="match status" value="1"/>
</dbReference>
<dbReference type="SMART" id="SM00485">
    <property type="entry name" value="XPGN"/>
    <property type="match status" value="1"/>
</dbReference>
<dbReference type="SUPFAM" id="SSF47807">
    <property type="entry name" value="5' to 3' exonuclease, C-terminal subdomain"/>
    <property type="match status" value="1"/>
</dbReference>
<dbReference type="SUPFAM" id="SSF88723">
    <property type="entry name" value="PIN domain-like"/>
    <property type="match status" value="1"/>
</dbReference>
<dbReference type="PROSITE" id="PS00841">
    <property type="entry name" value="XPG_1"/>
    <property type="match status" value="1"/>
</dbReference>
<dbReference type="PROSITE" id="PS00842">
    <property type="entry name" value="XPG_2"/>
    <property type="match status" value="1"/>
</dbReference>
<keyword id="KW-0227">DNA damage</keyword>
<keyword id="KW-0234">DNA repair</keyword>
<keyword id="KW-0235">DNA replication</keyword>
<keyword id="KW-0255">Endonuclease</keyword>
<keyword id="KW-0269">Exonuclease</keyword>
<keyword id="KW-0378">Hydrolase</keyword>
<keyword id="KW-0460">Magnesium</keyword>
<keyword id="KW-0479">Metal-binding</keyword>
<keyword id="KW-0496">Mitochondrion</keyword>
<keyword id="KW-0540">Nuclease</keyword>
<keyword id="KW-0539">Nucleus</keyword>
<keyword id="KW-0597">Phosphoprotein</keyword>
<keyword id="KW-1185">Reference proteome</keyword>
<accession>B8AMS4</accession>
<feature type="chain" id="PRO_0000403523" description="Flap endonuclease 1-B">
    <location>
        <begin position="1"/>
        <end position="412"/>
    </location>
</feature>
<feature type="region of interest" description="N-domain">
    <location>
        <begin position="1"/>
        <end position="105"/>
    </location>
</feature>
<feature type="region of interest" description="I-domain">
    <location>
        <begin position="123"/>
        <end position="254"/>
    </location>
</feature>
<feature type="binding site" evidence="1">
    <location>
        <position position="34"/>
    </location>
    <ligand>
        <name>Mg(2+)</name>
        <dbReference type="ChEBI" id="CHEBI:18420"/>
        <label>1</label>
    </ligand>
</feature>
<feature type="binding site" evidence="1">
    <location>
        <position position="71"/>
    </location>
    <ligand>
        <name>DNA</name>
        <dbReference type="ChEBI" id="CHEBI:16991"/>
    </ligand>
</feature>
<feature type="binding site" evidence="1">
    <location>
        <position position="87"/>
    </location>
    <ligand>
        <name>Mg(2+)</name>
        <dbReference type="ChEBI" id="CHEBI:18420"/>
        <label>1</label>
    </ligand>
</feature>
<feature type="binding site" evidence="1">
    <location>
        <position position="159"/>
    </location>
    <ligand>
        <name>DNA</name>
        <dbReference type="ChEBI" id="CHEBI:16991"/>
    </ligand>
</feature>
<feature type="binding site" evidence="1">
    <location>
        <position position="159"/>
    </location>
    <ligand>
        <name>Mg(2+)</name>
        <dbReference type="ChEBI" id="CHEBI:18420"/>
        <label>1</label>
    </ligand>
</feature>
<feature type="binding site" evidence="1">
    <location>
        <position position="161"/>
    </location>
    <ligand>
        <name>Mg(2+)</name>
        <dbReference type="ChEBI" id="CHEBI:18420"/>
        <label>1</label>
    </ligand>
</feature>
<feature type="binding site" evidence="1">
    <location>
        <position position="180"/>
    </location>
    <ligand>
        <name>Mg(2+)</name>
        <dbReference type="ChEBI" id="CHEBI:18420"/>
        <label>2</label>
    </ligand>
</feature>
<feature type="binding site" evidence="1">
    <location>
        <position position="182"/>
    </location>
    <ligand>
        <name>Mg(2+)</name>
        <dbReference type="ChEBI" id="CHEBI:18420"/>
        <label>2</label>
    </ligand>
</feature>
<feature type="binding site" evidence="1">
    <location>
        <position position="232"/>
    </location>
    <ligand>
        <name>DNA</name>
        <dbReference type="ChEBI" id="CHEBI:16991"/>
    </ligand>
</feature>
<feature type="binding site" evidence="1">
    <location>
        <position position="234"/>
    </location>
    <ligand>
        <name>DNA</name>
        <dbReference type="ChEBI" id="CHEBI:16991"/>
    </ligand>
</feature>
<feature type="binding site" evidence="1">
    <location>
        <position position="234"/>
    </location>
    <ligand>
        <name>Mg(2+)</name>
        <dbReference type="ChEBI" id="CHEBI:18420"/>
        <label>2</label>
    </ligand>
</feature>